<feature type="chain" id="PRO_0000064026" description="Probable aquaporin TIP3-2">
    <location>
        <begin position="1"/>
        <end position="265"/>
    </location>
</feature>
<feature type="transmembrane region" description="Helical; Name=1" evidence="2">
    <location>
        <begin position="32"/>
        <end position="52"/>
    </location>
</feature>
<feature type="transmembrane region" description="Helical; Name=2" evidence="2">
    <location>
        <begin position="62"/>
        <end position="82"/>
    </location>
</feature>
<feature type="transmembrane region" description="Helical; Name=3" evidence="2">
    <location>
        <begin position="110"/>
        <end position="130"/>
    </location>
</feature>
<feature type="transmembrane region" description="Helical; Name=4" evidence="2">
    <location>
        <begin position="151"/>
        <end position="171"/>
    </location>
</feature>
<feature type="transmembrane region" description="Helical; Name=5" evidence="2">
    <location>
        <begin position="179"/>
        <end position="199"/>
    </location>
</feature>
<feature type="transmembrane region" description="Helical; Name=6" evidence="2">
    <location>
        <begin position="223"/>
        <end position="243"/>
    </location>
</feature>
<feature type="short sequence motif" description="NPA 1">
    <location>
        <begin position="92"/>
        <end position="94"/>
    </location>
</feature>
<feature type="short sequence motif" description="NPA 2">
    <location>
        <begin position="205"/>
        <end position="207"/>
    </location>
</feature>
<feature type="sequence conflict" description="In Ref. 6; AK108116." evidence="4" ref="6">
    <original>I</original>
    <variation>T</variation>
    <location>
        <position position="180"/>
    </location>
</feature>
<comment type="function">
    <text evidence="1">Aquaporins facilitate the transport of water and small neutral solutes across cell membranes. May be involved in transport from the vacuolar compartment to the cytoplasm (By similarity).</text>
</comment>
<comment type="subcellular location">
    <subcellularLocation>
        <location evidence="1">Vacuole membrane</location>
        <topology evidence="1">Multi-pass membrane protein</topology>
    </subcellularLocation>
    <text>Tonoplast.</text>
</comment>
<comment type="tissue specificity">
    <text evidence="3">Expressed in leaves and at lower levels in roots.</text>
</comment>
<comment type="domain">
    <text>Aquaporins contain two tandem repeats each containing three membrane-spanning domains and a pore-forming loop with the signature motif Asn-Pro-Ala (NPA).</text>
</comment>
<comment type="similarity">
    <text evidence="4">Belongs to the MIP/aquaporin (TC 1.A.8) family. TIP (TC 1.A.8.10) subfamily.</text>
</comment>
<comment type="sequence caution" evidence="4">
    <conflict type="erroneous initiation">
        <sequence resource="EMBL-CDS" id="EAZ31408"/>
    </conflict>
</comment>
<protein>
    <recommendedName>
        <fullName>Probable aquaporin TIP3-2</fullName>
    </recommendedName>
    <alternativeName>
        <fullName>Tonoplast intrinsic protein 3-2</fullName>
        <shortName>OsTIP3;2</shortName>
    </alternativeName>
</protein>
<sequence>MLPGRHTPRRADAAAAAAAMEPLVPGATRAALSEFVATAVFVFAAEGSVYGLWKMYRDTGTLGGLLVVAVAHALALAAAVAVSRNASGGHVNPAVTFGVLVGRRISFARAALYWAAQLLGAVLAVLLLRLASGGMRPMGFTLGHRIHERHALLLEVVMTFGLVYTVYATAVDRRSGGGDIAPLAIGLVAGANILAGGPFDGAAMNPARAFGPALVGWNWRHHWVYWLGPLIGAGMAGALYEFVMAEQPEPPAAADTRLPVAAEDY</sequence>
<evidence type="ECO:0000250" key="1"/>
<evidence type="ECO:0000255" key="2"/>
<evidence type="ECO:0000269" key="3">
    <source>
    </source>
</evidence>
<evidence type="ECO:0000305" key="4"/>
<accession>Q7XKI5</accession>
<accession>A0A0P0WCK7</accession>
<accession>A3AVR9</accession>
<accession>Q0JBK2</accession>
<dbReference type="EMBL" id="AL663019">
    <property type="protein sequence ID" value="CAE05657.2"/>
    <property type="molecule type" value="Genomic_DNA"/>
</dbReference>
<dbReference type="EMBL" id="AP008210">
    <property type="protein sequence ID" value="BAF15285.1"/>
    <property type="molecule type" value="Genomic_DNA"/>
</dbReference>
<dbReference type="EMBL" id="AP014960">
    <property type="protein sequence ID" value="BAS90178.1"/>
    <property type="molecule type" value="Genomic_DNA"/>
</dbReference>
<dbReference type="EMBL" id="CM000141">
    <property type="protein sequence ID" value="EAZ31408.1"/>
    <property type="status" value="ALT_INIT"/>
    <property type="molecule type" value="Genomic_DNA"/>
</dbReference>
<dbReference type="EMBL" id="AK108116">
    <property type="status" value="NOT_ANNOTATED_CDS"/>
    <property type="molecule type" value="mRNA"/>
</dbReference>
<dbReference type="RefSeq" id="XP_015637278.1">
    <property type="nucleotide sequence ID" value="XM_015781792.1"/>
</dbReference>
<dbReference type="SMR" id="Q7XKI5"/>
<dbReference type="FunCoup" id="Q7XKI5">
    <property type="interactions" value="304"/>
</dbReference>
<dbReference type="STRING" id="39947.Q7XKI5"/>
<dbReference type="PaxDb" id="39947-Q7XKI5"/>
<dbReference type="EnsemblPlants" id="Os04t0527900-01">
    <property type="protein sequence ID" value="Os04t0527900-01"/>
    <property type="gene ID" value="Os04g0527900"/>
</dbReference>
<dbReference type="Gramene" id="Os04t0527900-01">
    <property type="protein sequence ID" value="Os04t0527900-01"/>
    <property type="gene ID" value="Os04g0527900"/>
</dbReference>
<dbReference type="KEGG" id="dosa:Os04g0527900"/>
<dbReference type="eggNOG" id="KOG0223">
    <property type="taxonomic scope" value="Eukaryota"/>
</dbReference>
<dbReference type="HOGENOM" id="CLU_020019_3_4_1"/>
<dbReference type="InParanoid" id="Q7XKI5"/>
<dbReference type="OMA" id="GDWWAEL"/>
<dbReference type="OrthoDB" id="3222at2759"/>
<dbReference type="Proteomes" id="UP000000763">
    <property type="component" value="Chromosome 4"/>
</dbReference>
<dbReference type="Proteomes" id="UP000007752">
    <property type="component" value="Chromosome 4"/>
</dbReference>
<dbReference type="Proteomes" id="UP000059680">
    <property type="component" value="Chromosome 4"/>
</dbReference>
<dbReference type="GO" id="GO:0009705">
    <property type="term" value="C:plant-type vacuole membrane"/>
    <property type="evidence" value="ECO:0000318"/>
    <property type="project" value="GO_Central"/>
</dbReference>
<dbReference type="GO" id="GO:0015250">
    <property type="term" value="F:water channel activity"/>
    <property type="evidence" value="ECO:0000318"/>
    <property type="project" value="GO_Central"/>
</dbReference>
<dbReference type="GO" id="GO:0006833">
    <property type="term" value="P:water transport"/>
    <property type="evidence" value="ECO:0000318"/>
    <property type="project" value="GO_Central"/>
</dbReference>
<dbReference type="FunFam" id="1.20.1080.10:FF:000017">
    <property type="entry name" value="Probable aquaporin TIP5-1"/>
    <property type="match status" value="1"/>
</dbReference>
<dbReference type="Gene3D" id="1.20.1080.10">
    <property type="entry name" value="Glycerol uptake facilitator protein"/>
    <property type="match status" value="1"/>
</dbReference>
<dbReference type="InterPro" id="IPR023271">
    <property type="entry name" value="Aquaporin-like"/>
</dbReference>
<dbReference type="InterPro" id="IPR034294">
    <property type="entry name" value="Aquaporin_transptr"/>
</dbReference>
<dbReference type="InterPro" id="IPR000425">
    <property type="entry name" value="MIP"/>
</dbReference>
<dbReference type="InterPro" id="IPR022357">
    <property type="entry name" value="MIP_CS"/>
</dbReference>
<dbReference type="NCBIfam" id="TIGR00861">
    <property type="entry name" value="MIP"/>
    <property type="match status" value="1"/>
</dbReference>
<dbReference type="PANTHER" id="PTHR45665:SF14">
    <property type="entry name" value="AQUAPORIN TIP3-2-RELATED"/>
    <property type="match status" value="1"/>
</dbReference>
<dbReference type="PANTHER" id="PTHR45665">
    <property type="entry name" value="AQUAPORIN-8"/>
    <property type="match status" value="1"/>
</dbReference>
<dbReference type="Pfam" id="PF00230">
    <property type="entry name" value="MIP"/>
    <property type="match status" value="1"/>
</dbReference>
<dbReference type="PRINTS" id="PR00783">
    <property type="entry name" value="MINTRINSICP"/>
</dbReference>
<dbReference type="SUPFAM" id="SSF81338">
    <property type="entry name" value="Aquaporin-like"/>
    <property type="match status" value="1"/>
</dbReference>
<dbReference type="PROSITE" id="PS00221">
    <property type="entry name" value="MIP"/>
    <property type="match status" value="1"/>
</dbReference>
<proteinExistence type="evidence at transcript level"/>
<name>TIP32_ORYSJ</name>
<gene>
    <name type="primary">TIP3-2</name>
    <name type="ordered locus">Os04g0527900</name>
    <name type="ordered locus">LOC_Os04g44570</name>
    <name type="ORF">OsJ_014891</name>
    <name type="ORF">OSJNBa0038O10.23</name>
</gene>
<organism>
    <name type="scientific">Oryza sativa subsp. japonica</name>
    <name type="common">Rice</name>
    <dbReference type="NCBI Taxonomy" id="39947"/>
    <lineage>
        <taxon>Eukaryota</taxon>
        <taxon>Viridiplantae</taxon>
        <taxon>Streptophyta</taxon>
        <taxon>Embryophyta</taxon>
        <taxon>Tracheophyta</taxon>
        <taxon>Spermatophyta</taxon>
        <taxon>Magnoliopsida</taxon>
        <taxon>Liliopsida</taxon>
        <taxon>Poales</taxon>
        <taxon>Poaceae</taxon>
        <taxon>BOP clade</taxon>
        <taxon>Oryzoideae</taxon>
        <taxon>Oryzeae</taxon>
        <taxon>Oryzinae</taxon>
        <taxon>Oryza</taxon>
        <taxon>Oryza sativa</taxon>
    </lineage>
</organism>
<keyword id="KW-0472">Membrane</keyword>
<keyword id="KW-1185">Reference proteome</keyword>
<keyword id="KW-0677">Repeat</keyword>
<keyword id="KW-0812">Transmembrane</keyword>
<keyword id="KW-1133">Transmembrane helix</keyword>
<keyword id="KW-0813">Transport</keyword>
<keyword id="KW-0926">Vacuole</keyword>
<reference key="1">
    <citation type="journal article" date="2002" name="Nature">
        <title>Sequence and analysis of rice chromosome 4.</title>
        <authorList>
            <person name="Feng Q."/>
            <person name="Zhang Y."/>
            <person name="Hao P."/>
            <person name="Wang S."/>
            <person name="Fu G."/>
            <person name="Huang Y."/>
            <person name="Li Y."/>
            <person name="Zhu J."/>
            <person name="Liu Y."/>
            <person name="Hu X."/>
            <person name="Jia P."/>
            <person name="Zhang Y."/>
            <person name="Zhao Q."/>
            <person name="Ying K."/>
            <person name="Yu S."/>
            <person name="Tang Y."/>
            <person name="Weng Q."/>
            <person name="Zhang L."/>
            <person name="Lu Y."/>
            <person name="Mu J."/>
            <person name="Lu Y."/>
            <person name="Zhang L.S."/>
            <person name="Yu Z."/>
            <person name="Fan D."/>
            <person name="Liu X."/>
            <person name="Lu T."/>
            <person name="Li C."/>
            <person name="Wu Y."/>
            <person name="Sun T."/>
            <person name="Lei H."/>
            <person name="Li T."/>
            <person name="Hu H."/>
            <person name="Guan J."/>
            <person name="Wu M."/>
            <person name="Zhang R."/>
            <person name="Zhou B."/>
            <person name="Chen Z."/>
            <person name="Chen L."/>
            <person name="Jin Z."/>
            <person name="Wang R."/>
            <person name="Yin H."/>
            <person name="Cai Z."/>
            <person name="Ren S."/>
            <person name="Lv G."/>
            <person name="Gu W."/>
            <person name="Zhu G."/>
            <person name="Tu Y."/>
            <person name="Jia J."/>
            <person name="Zhang Y."/>
            <person name="Chen J."/>
            <person name="Kang H."/>
            <person name="Chen X."/>
            <person name="Shao C."/>
            <person name="Sun Y."/>
            <person name="Hu Q."/>
            <person name="Zhang X."/>
            <person name="Zhang W."/>
            <person name="Wang L."/>
            <person name="Ding C."/>
            <person name="Sheng H."/>
            <person name="Gu J."/>
            <person name="Chen S."/>
            <person name="Ni L."/>
            <person name="Zhu F."/>
            <person name="Chen W."/>
            <person name="Lan L."/>
            <person name="Lai Y."/>
            <person name="Cheng Z."/>
            <person name="Gu M."/>
            <person name="Jiang J."/>
            <person name="Li J."/>
            <person name="Hong G."/>
            <person name="Xue Y."/>
            <person name="Han B."/>
        </authorList>
    </citation>
    <scope>NUCLEOTIDE SEQUENCE [LARGE SCALE GENOMIC DNA]</scope>
    <source>
        <strain>cv. Nipponbare</strain>
    </source>
</reference>
<reference key="2">
    <citation type="journal article" date="2005" name="Nature">
        <title>The map-based sequence of the rice genome.</title>
        <authorList>
            <consortium name="International rice genome sequencing project (IRGSP)"/>
        </authorList>
    </citation>
    <scope>NUCLEOTIDE SEQUENCE [LARGE SCALE GENOMIC DNA]</scope>
    <source>
        <strain>cv. Nipponbare</strain>
    </source>
</reference>
<reference key="3">
    <citation type="journal article" date="2008" name="Nucleic Acids Res.">
        <title>The rice annotation project database (RAP-DB): 2008 update.</title>
        <authorList>
            <consortium name="The rice annotation project (RAP)"/>
        </authorList>
    </citation>
    <scope>GENOME REANNOTATION</scope>
    <source>
        <strain>cv. Nipponbare</strain>
    </source>
</reference>
<reference key="4">
    <citation type="journal article" date="2013" name="Rice">
        <title>Improvement of the Oryza sativa Nipponbare reference genome using next generation sequence and optical map data.</title>
        <authorList>
            <person name="Kawahara Y."/>
            <person name="de la Bastide M."/>
            <person name="Hamilton J.P."/>
            <person name="Kanamori H."/>
            <person name="McCombie W.R."/>
            <person name="Ouyang S."/>
            <person name="Schwartz D.C."/>
            <person name="Tanaka T."/>
            <person name="Wu J."/>
            <person name="Zhou S."/>
            <person name="Childs K.L."/>
            <person name="Davidson R.M."/>
            <person name="Lin H."/>
            <person name="Quesada-Ocampo L."/>
            <person name="Vaillancourt B."/>
            <person name="Sakai H."/>
            <person name="Lee S.S."/>
            <person name="Kim J."/>
            <person name="Numa H."/>
            <person name="Itoh T."/>
            <person name="Buell C.R."/>
            <person name="Matsumoto T."/>
        </authorList>
    </citation>
    <scope>GENOME REANNOTATION</scope>
    <source>
        <strain>cv. Nipponbare</strain>
    </source>
</reference>
<reference key="5">
    <citation type="journal article" date="2005" name="PLoS Biol.">
        <title>The genomes of Oryza sativa: a history of duplications.</title>
        <authorList>
            <person name="Yu J."/>
            <person name="Wang J."/>
            <person name="Lin W."/>
            <person name="Li S."/>
            <person name="Li H."/>
            <person name="Zhou J."/>
            <person name="Ni P."/>
            <person name="Dong W."/>
            <person name="Hu S."/>
            <person name="Zeng C."/>
            <person name="Zhang J."/>
            <person name="Zhang Y."/>
            <person name="Li R."/>
            <person name="Xu Z."/>
            <person name="Li S."/>
            <person name="Li X."/>
            <person name="Zheng H."/>
            <person name="Cong L."/>
            <person name="Lin L."/>
            <person name="Yin J."/>
            <person name="Geng J."/>
            <person name="Li G."/>
            <person name="Shi J."/>
            <person name="Liu J."/>
            <person name="Lv H."/>
            <person name="Li J."/>
            <person name="Wang J."/>
            <person name="Deng Y."/>
            <person name="Ran L."/>
            <person name="Shi X."/>
            <person name="Wang X."/>
            <person name="Wu Q."/>
            <person name="Li C."/>
            <person name="Ren X."/>
            <person name="Wang J."/>
            <person name="Wang X."/>
            <person name="Li D."/>
            <person name="Liu D."/>
            <person name="Zhang X."/>
            <person name="Ji Z."/>
            <person name="Zhao W."/>
            <person name="Sun Y."/>
            <person name="Zhang Z."/>
            <person name="Bao J."/>
            <person name="Han Y."/>
            <person name="Dong L."/>
            <person name="Ji J."/>
            <person name="Chen P."/>
            <person name="Wu S."/>
            <person name="Liu J."/>
            <person name="Xiao Y."/>
            <person name="Bu D."/>
            <person name="Tan J."/>
            <person name="Yang L."/>
            <person name="Ye C."/>
            <person name="Zhang J."/>
            <person name="Xu J."/>
            <person name="Zhou Y."/>
            <person name="Yu Y."/>
            <person name="Zhang B."/>
            <person name="Zhuang S."/>
            <person name="Wei H."/>
            <person name="Liu B."/>
            <person name="Lei M."/>
            <person name="Yu H."/>
            <person name="Li Y."/>
            <person name="Xu H."/>
            <person name="Wei S."/>
            <person name="He X."/>
            <person name="Fang L."/>
            <person name="Zhang Z."/>
            <person name="Zhang Y."/>
            <person name="Huang X."/>
            <person name="Su Z."/>
            <person name="Tong W."/>
            <person name="Li J."/>
            <person name="Tong Z."/>
            <person name="Li S."/>
            <person name="Ye J."/>
            <person name="Wang L."/>
            <person name="Fang L."/>
            <person name="Lei T."/>
            <person name="Chen C.-S."/>
            <person name="Chen H.-C."/>
            <person name="Xu Z."/>
            <person name="Li H."/>
            <person name="Huang H."/>
            <person name="Zhang F."/>
            <person name="Xu H."/>
            <person name="Li N."/>
            <person name="Zhao C."/>
            <person name="Li S."/>
            <person name="Dong L."/>
            <person name="Huang Y."/>
            <person name="Li L."/>
            <person name="Xi Y."/>
            <person name="Qi Q."/>
            <person name="Li W."/>
            <person name="Zhang B."/>
            <person name="Hu W."/>
            <person name="Zhang Y."/>
            <person name="Tian X."/>
            <person name="Jiao Y."/>
            <person name="Liang X."/>
            <person name="Jin J."/>
            <person name="Gao L."/>
            <person name="Zheng W."/>
            <person name="Hao B."/>
            <person name="Liu S.-M."/>
            <person name="Wang W."/>
            <person name="Yuan L."/>
            <person name="Cao M."/>
            <person name="McDermott J."/>
            <person name="Samudrala R."/>
            <person name="Wang J."/>
            <person name="Wong G.K.-S."/>
            <person name="Yang H."/>
        </authorList>
    </citation>
    <scope>NUCLEOTIDE SEQUENCE [LARGE SCALE GENOMIC DNA]</scope>
    <source>
        <strain>cv. Nipponbare</strain>
    </source>
</reference>
<reference key="6">
    <citation type="journal article" date="2003" name="Science">
        <title>Collection, mapping, and annotation of over 28,000 cDNA clones from japonica rice.</title>
        <authorList>
            <consortium name="The rice full-length cDNA consortium"/>
        </authorList>
    </citation>
    <scope>NUCLEOTIDE SEQUENCE [LARGE SCALE MRNA]</scope>
    <source>
        <strain>cv. Nipponbare</strain>
    </source>
</reference>
<reference key="7">
    <citation type="journal article" date="2005" name="Plant Cell Physiol.">
        <title>Identification of 33 rice aquaporin genes and analysis of their expression and function.</title>
        <authorList>
            <person name="Sakurai J."/>
            <person name="Ishikawa F."/>
            <person name="Yamaguchi T."/>
            <person name="Uemura M."/>
            <person name="Maeshima M."/>
        </authorList>
    </citation>
    <scope>NOMENCLATURE</scope>
    <scope>TISSUE SPECIFICITY</scope>
</reference>